<comment type="function">
    <text evidence="1">Binds to 23S rRNA.</text>
</comment>
<comment type="subunit">
    <text evidence="1">Part of the 50S ribosomal subunit.</text>
</comment>
<comment type="subcellular location">
    <subcellularLocation>
        <location>Plastid</location>
    </subcellularLocation>
</comment>
<comment type="similarity">
    <text evidence="1">Belongs to the universal ribosomal protein uL14 family.</text>
</comment>
<comment type="caution">
    <text evidence="2">Young tissue from this organism is photosynthetic and contains some thylakoids, although the photosynthetic activity does not exceed the light compensation point.</text>
</comment>
<gene>
    <name evidence="1" type="primary">rpl14</name>
</gene>
<feature type="chain" id="PRO_0000355872" description="Large ribosomal subunit protein uL14c">
    <location>
        <begin position="1"/>
        <end position="122"/>
    </location>
</feature>
<keyword id="KW-0934">Plastid</keyword>
<keyword id="KW-0687">Ribonucleoprotein</keyword>
<keyword id="KW-0689">Ribosomal protein</keyword>
<keyword id="KW-0694">RNA-binding</keyword>
<keyword id="KW-0699">rRNA-binding</keyword>
<accession>A8W3F7</accession>
<evidence type="ECO:0000255" key="1">
    <source>
        <dbReference type="HAMAP-Rule" id="MF_01367"/>
    </source>
</evidence>
<evidence type="ECO:0000305" key="2"/>
<proteinExistence type="inferred from homology"/>
<reference key="1">
    <citation type="journal article" date="2007" name="BMC Plant Biol.">
        <title>Complete plastid genome sequences suggest strong selection for retention of photosynthetic genes in the parasitic plant genus Cuscuta.</title>
        <authorList>
            <person name="McNeal J.R."/>
            <person name="Kuehl J.V."/>
            <person name="Boore J.L."/>
            <person name="dePamphilis C.W."/>
        </authorList>
    </citation>
    <scope>NUCLEOTIDE SEQUENCE [LARGE SCALE GENOMIC DNA]</scope>
</reference>
<geneLocation type="plastid"/>
<dbReference type="EMBL" id="EU189132">
    <property type="protein sequence ID" value="ABW83728.1"/>
    <property type="molecule type" value="Genomic_DNA"/>
</dbReference>
<dbReference type="RefSeq" id="YP_001542564.1">
    <property type="nucleotide sequence ID" value="NC_009963.1"/>
</dbReference>
<dbReference type="SMR" id="A8W3F7"/>
<dbReference type="GeneID" id="5729614"/>
<dbReference type="GO" id="GO:0022625">
    <property type="term" value="C:cytosolic large ribosomal subunit"/>
    <property type="evidence" value="ECO:0007669"/>
    <property type="project" value="TreeGrafter"/>
</dbReference>
<dbReference type="GO" id="GO:0009536">
    <property type="term" value="C:plastid"/>
    <property type="evidence" value="ECO:0007669"/>
    <property type="project" value="UniProtKB-SubCell"/>
</dbReference>
<dbReference type="GO" id="GO:0070180">
    <property type="term" value="F:large ribosomal subunit rRNA binding"/>
    <property type="evidence" value="ECO:0007669"/>
    <property type="project" value="TreeGrafter"/>
</dbReference>
<dbReference type="GO" id="GO:0003735">
    <property type="term" value="F:structural constituent of ribosome"/>
    <property type="evidence" value="ECO:0007669"/>
    <property type="project" value="InterPro"/>
</dbReference>
<dbReference type="GO" id="GO:0006412">
    <property type="term" value="P:translation"/>
    <property type="evidence" value="ECO:0007669"/>
    <property type="project" value="InterPro"/>
</dbReference>
<dbReference type="CDD" id="cd00337">
    <property type="entry name" value="Ribosomal_uL14"/>
    <property type="match status" value="1"/>
</dbReference>
<dbReference type="FunFam" id="2.40.150.20:FF:000002">
    <property type="entry name" value="50S ribosomal protein L14, chloroplastic"/>
    <property type="match status" value="1"/>
</dbReference>
<dbReference type="Gene3D" id="2.40.150.20">
    <property type="entry name" value="Ribosomal protein L14"/>
    <property type="match status" value="1"/>
</dbReference>
<dbReference type="HAMAP" id="MF_01367">
    <property type="entry name" value="Ribosomal_uL14"/>
    <property type="match status" value="1"/>
</dbReference>
<dbReference type="InterPro" id="IPR000218">
    <property type="entry name" value="Ribosomal_uL14"/>
</dbReference>
<dbReference type="InterPro" id="IPR005745">
    <property type="entry name" value="Ribosomal_uL14_bac-type"/>
</dbReference>
<dbReference type="InterPro" id="IPR019972">
    <property type="entry name" value="Ribosomal_uL14_CS"/>
</dbReference>
<dbReference type="InterPro" id="IPR036853">
    <property type="entry name" value="Ribosomal_uL14_sf"/>
</dbReference>
<dbReference type="NCBIfam" id="TIGR01067">
    <property type="entry name" value="rplN_bact"/>
    <property type="match status" value="1"/>
</dbReference>
<dbReference type="PANTHER" id="PTHR11761">
    <property type="entry name" value="50S/60S RIBOSOMAL PROTEIN L14/L23"/>
    <property type="match status" value="1"/>
</dbReference>
<dbReference type="PANTHER" id="PTHR11761:SF3">
    <property type="entry name" value="LARGE RIBOSOMAL SUBUNIT PROTEIN UL14M"/>
    <property type="match status" value="1"/>
</dbReference>
<dbReference type="Pfam" id="PF00238">
    <property type="entry name" value="Ribosomal_L14"/>
    <property type="match status" value="1"/>
</dbReference>
<dbReference type="SMART" id="SM01374">
    <property type="entry name" value="Ribosomal_L14"/>
    <property type="match status" value="1"/>
</dbReference>
<dbReference type="SUPFAM" id="SSF50193">
    <property type="entry name" value="Ribosomal protein L14"/>
    <property type="match status" value="1"/>
</dbReference>
<dbReference type="PROSITE" id="PS00049">
    <property type="entry name" value="RIBOSOMAL_L14"/>
    <property type="match status" value="1"/>
</dbReference>
<organism>
    <name type="scientific">Cuscuta exaltata</name>
    <name type="common">Tall dodder</name>
    <dbReference type="NCBI Taxonomy" id="476139"/>
    <lineage>
        <taxon>Eukaryota</taxon>
        <taxon>Viridiplantae</taxon>
        <taxon>Streptophyta</taxon>
        <taxon>Embryophyta</taxon>
        <taxon>Tracheophyta</taxon>
        <taxon>Spermatophyta</taxon>
        <taxon>Magnoliopsida</taxon>
        <taxon>eudicotyledons</taxon>
        <taxon>Gunneridae</taxon>
        <taxon>Pentapetalae</taxon>
        <taxon>asterids</taxon>
        <taxon>lamiids</taxon>
        <taxon>Solanales</taxon>
        <taxon>Convolvulaceae</taxon>
        <taxon>Cuscuteae</taxon>
        <taxon>Cuscuta</taxon>
        <taxon>Cuscuta subgen. Monogynella</taxon>
    </lineage>
</organism>
<sequence>MIQPQTHLNVADNSGARELMCIRIIGASNRRYAHIGDIIVAVIKEAVPNMPLERSELVRAVIVRTRKELKRDNGMIIRYDDNAAVVIDQEGNPKGTRIFGAIPRELRPLNFTKIVSLAPEVL</sequence>
<name>RK14_CUSEX</name>
<protein>
    <recommendedName>
        <fullName evidence="1">Large ribosomal subunit protein uL14c</fullName>
    </recommendedName>
    <alternativeName>
        <fullName evidence="2">50S ribosomal protein L14, plastid</fullName>
    </alternativeName>
</protein>